<evidence type="ECO:0000255" key="1">
    <source>
        <dbReference type="HAMAP-Rule" id="MF_00540"/>
    </source>
</evidence>
<reference key="1">
    <citation type="submission" date="2003-06" db="EMBL/GenBank/DDBJ databases">
        <title>The complete genome sequence of Haemophilus ducreyi.</title>
        <authorList>
            <person name="Munson R.S. Jr."/>
            <person name="Ray W.C."/>
            <person name="Mahairas G."/>
            <person name="Sabo P."/>
            <person name="Mungur R."/>
            <person name="Johnson L."/>
            <person name="Nguyen D."/>
            <person name="Wang J."/>
            <person name="Forst C."/>
            <person name="Hood L."/>
        </authorList>
    </citation>
    <scope>NUCLEOTIDE SEQUENCE [LARGE SCALE GENOMIC DNA]</scope>
    <source>
        <strain>35000HP / ATCC 700724</strain>
    </source>
</reference>
<accession>Q7VNV1</accession>
<proteinExistence type="inferred from homology"/>
<organism>
    <name type="scientific">Haemophilus ducreyi (strain 35000HP / ATCC 700724)</name>
    <dbReference type="NCBI Taxonomy" id="233412"/>
    <lineage>
        <taxon>Bacteria</taxon>
        <taxon>Pseudomonadati</taxon>
        <taxon>Pseudomonadota</taxon>
        <taxon>Gammaproteobacteria</taxon>
        <taxon>Pasteurellales</taxon>
        <taxon>Pasteurellaceae</taxon>
        <taxon>Haemophilus</taxon>
    </lineage>
</organism>
<comment type="function">
    <text evidence="1">Catalyzes the hydrolytic deamination of adenosine and 2-deoxyadenosine.</text>
</comment>
<comment type="catalytic activity">
    <reaction evidence="1">
        <text>adenosine + H2O + H(+) = inosine + NH4(+)</text>
        <dbReference type="Rhea" id="RHEA:24408"/>
        <dbReference type="ChEBI" id="CHEBI:15377"/>
        <dbReference type="ChEBI" id="CHEBI:15378"/>
        <dbReference type="ChEBI" id="CHEBI:16335"/>
        <dbReference type="ChEBI" id="CHEBI:17596"/>
        <dbReference type="ChEBI" id="CHEBI:28938"/>
        <dbReference type="EC" id="3.5.4.4"/>
    </reaction>
    <physiologicalReaction direction="left-to-right" evidence="1">
        <dbReference type="Rhea" id="RHEA:24409"/>
    </physiologicalReaction>
</comment>
<comment type="catalytic activity">
    <reaction evidence="1">
        <text>2'-deoxyadenosine + H2O + H(+) = 2'-deoxyinosine + NH4(+)</text>
        <dbReference type="Rhea" id="RHEA:28190"/>
        <dbReference type="ChEBI" id="CHEBI:15377"/>
        <dbReference type="ChEBI" id="CHEBI:15378"/>
        <dbReference type="ChEBI" id="CHEBI:17256"/>
        <dbReference type="ChEBI" id="CHEBI:28938"/>
        <dbReference type="ChEBI" id="CHEBI:28997"/>
        <dbReference type="EC" id="3.5.4.4"/>
    </reaction>
    <physiologicalReaction direction="left-to-right" evidence="1">
        <dbReference type="Rhea" id="RHEA:28191"/>
    </physiologicalReaction>
</comment>
<comment type="cofactor">
    <cofactor evidence="1">
        <name>Zn(2+)</name>
        <dbReference type="ChEBI" id="CHEBI:29105"/>
    </cofactor>
    <text evidence="1">Binds 1 zinc ion per subunit.</text>
</comment>
<comment type="similarity">
    <text evidence="1">Belongs to the metallo-dependent hydrolases superfamily. Adenosine and AMP deaminases family. Adenosine deaminase subfamily.</text>
</comment>
<dbReference type="EC" id="3.5.4.4" evidence="1"/>
<dbReference type="EMBL" id="AE017143">
    <property type="protein sequence ID" value="AAP95347.1"/>
    <property type="molecule type" value="Genomic_DNA"/>
</dbReference>
<dbReference type="RefSeq" id="WP_010944400.1">
    <property type="nucleotide sequence ID" value="NC_002940.2"/>
</dbReference>
<dbReference type="SMR" id="Q7VNV1"/>
<dbReference type="STRING" id="233412.HD_0377"/>
<dbReference type="KEGG" id="hdu:HD_0377"/>
<dbReference type="eggNOG" id="COG1816">
    <property type="taxonomic scope" value="Bacteria"/>
</dbReference>
<dbReference type="HOGENOM" id="CLU_039228_0_0_6"/>
<dbReference type="OrthoDB" id="105475at2"/>
<dbReference type="Proteomes" id="UP000001022">
    <property type="component" value="Chromosome"/>
</dbReference>
<dbReference type="GO" id="GO:0005829">
    <property type="term" value="C:cytosol"/>
    <property type="evidence" value="ECO:0007669"/>
    <property type="project" value="TreeGrafter"/>
</dbReference>
<dbReference type="GO" id="GO:0046936">
    <property type="term" value="F:2'-deoxyadenosine deaminase activity"/>
    <property type="evidence" value="ECO:0007669"/>
    <property type="project" value="RHEA"/>
</dbReference>
<dbReference type="GO" id="GO:0004000">
    <property type="term" value="F:adenosine deaminase activity"/>
    <property type="evidence" value="ECO:0007669"/>
    <property type="project" value="UniProtKB-UniRule"/>
</dbReference>
<dbReference type="GO" id="GO:0008270">
    <property type="term" value="F:zinc ion binding"/>
    <property type="evidence" value="ECO:0007669"/>
    <property type="project" value="UniProtKB-UniRule"/>
</dbReference>
<dbReference type="GO" id="GO:0006154">
    <property type="term" value="P:adenosine catabolic process"/>
    <property type="evidence" value="ECO:0007669"/>
    <property type="project" value="TreeGrafter"/>
</dbReference>
<dbReference type="GO" id="GO:0043103">
    <property type="term" value="P:hypoxanthine salvage"/>
    <property type="evidence" value="ECO:0007669"/>
    <property type="project" value="TreeGrafter"/>
</dbReference>
<dbReference type="GO" id="GO:0046103">
    <property type="term" value="P:inosine biosynthetic process"/>
    <property type="evidence" value="ECO:0007669"/>
    <property type="project" value="TreeGrafter"/>
</dbReference>
<dbReference type="GO" id="GO:0009117">
    <property type="term" value="P:nucleotide metabolic process"/>
    <property type="evidence" value="ECO:0007669"/>
    <property type="project" value="UniProtKB-KW"/>
</dbReference>
<dbReference type="GO" id="GO:0009168">
    <property type="term" value="P:purine ribonucleoside monophosphate biosynthetic process"/>
    <property type="evidence" value="ECO:0007669"/>
    <property type="project" value="UniProtKB-UniRule"/>
</dbReference>
<dbReference type="CDD" id="cd01320">
    <property type="entry name" value="ADA"/>
    <property type="match status" value="1"/>
</dbReference>
<dbReference type="Gene3D" id="3.20.20.140">
    <property type="entry name" value="Metal-dependent hydrolases"/>
    <property type="match status" value="1"/>
</dbReference>
<dbReference type="HAMAP" id="MF_00540">
    <property type="entry name" value="A_deaminase"/>
    <property type="match status" value="1"/>
</dbReference>
<dbReference type="InterPro" id="IPR028893">
    <property type="entry name" value="A_deaminase"/>
</dbReference>
<dbReference type="InterPro" id="IPR001365">
    <property type="entry name" value="A_deaminase_dom"/>
</dbReference>
<dbReference type="InterPro" id="IPR006330">
    <property type="entry name" value="Ado/ade_deaminase"/>
</dbReference>
<dbReference type="InterPro" id="IPR032466">
    <property type="entry name" value="Metal_Hydrolase"/>
</dbReference>
<dbReference type="NCBIfam" id="TIGR01430">
    <property type="entry name" value="aden_deam"/>
    <property type="match status" value="1"/>
</dbReference>
<dbReference type="PANTHER" id="PTHR11409">
    <property type="entry name" value="ADENOSINE DEAMINASE"/>
    <property type="match status" value="1"/>
</dbReference>
<dbReference type="PANTHER" id="PTHR11409:SF43">
    <property type="entry name" value="ADENOSINE DEAMINASE"/>
    <property type="match status" value="1"/>
</dbReference>
<dbReference type="Pfam" id="PF00962">
    <property type="entry name" value="A_deaminase"/>
    <property type="match status" value="1"/>
</dbReference>
<dbReference type="SUPFAM" id="SSF51556">
    <property type="entry name" value="Metallo-dependent hydrolases"/>
    <property type="match status" value="1"/>
</dbReference>
<keyword id="KW-0378">Hydrolase</keyword>
<keyword id="KW-0479">Metal-binding</keyword>
<keyword id="KW-0546">Nucleotide metabolism</keyword>
<keyword id="KW-1185">Reference proteome</keyword>
<keyword id="KW-0862">Zinc</keyword>
<name>ADD_HAEDU</name>
<gene>
    <name evidence="1" type="primary">add</name>
    <name type="ordered locus">HD_0377</name>
</gene>
<sequence length="344" mass="37834">MVLGLAQYGVIDLHLHLDGSLSPAWMIEWAKKQAVNLPASTAEALTAYVSVPQDCSDLNEYLRCFDLPLSLLQTPEALSSAVTDLIQRLDQDGLVYAEIRFAPQLHTQRSMSQEDAVKAALRGLQAGLASTSLFKANLILCCMRAADNRSANLETICLAKQYLTKYEAGVVAIDLAGAEGLFATQHFQQEFDFANQRGVPFTIHAGEAAGPESVQQALDFGATRIGHGIRAIESETVMKQLIDKRTPLEMCPCSNLQTKTVAQLADYPLRTFLMRGVVATLNTDNMTVSQTCIQQEYRLLAEQYQLSISEAKQLLLNSIAAAFLSNEDKKALLAHIQQRYPQLI</sequence>
<feature type="chain" id="PRO_0000194371" description="Adenosine deaminase">
    <location>
        <begin position="1"/>
        <end position="344"/>
    </location>
</feature>
<feature type="active site" description="Proton donor" evidence="1">
    <location>
        <position position="207"/>
    </location>
</feature>
<feature type="binding site" evidence="1">
    <location>
        <position position="14"/>
    </location>
    <ligand>
        <name>Zn(2+)</name>
        <dbReference type="ChEBI" id="CHEBI:29105"/>
        <note>catalytic</note>
    </ligand>
</feature>
<feature type="binding site" evidence="1">
    <location>
        <position position="16"/>
    </location>
    <ligand>
        <name>substrate</name>
    </ligand>
</feature>
<feature type="binding site" evidence="1">
    <location>
        <position position="16"/>
    </location>
    <ligand>
        <name>Zn(2+)</name>
        <dbReference type="ChEBI" id="CHEBI:29105"/>
        <note>catalytic</note>
    </ligand>
</feature>
<feature type="binding site" evidence="1">
    <location>
        <position position="18"/>
    </location>
    <ligand>
        <name>substrate</name>
    </ligand>
</feature>
<feature type="binding site" evidence="1">
    <location>
        <position position="177"/>
    </location>
    <ligand>
        <name>substrate</name>
    </ligand>
</feature>
<feature type="binding site" evidence="1">
    <location>
        <position position="204"/>
    </location>
    <ligand>
        <name>Zn(2+)</name>
        <dbReference type="ChEBI" id="CHEBI:29105"/>
        <note>catalytic</note>
    </ligand>
</feature>
<feature type="binding site" evidence="1">
    <location>
        <position position="284"/>
    </location>
    <ligand>
        <name>Zn(2+)</name>
        <dbReference type="ChEBI" id="CHEBI:29105"/>
        <note>catalytic</note>
    </ligand>
</feature>
<feature type="site" description="Important for catalytic activity" evidence="1">
    <location>
        <position position="227"/>
    </location>
</feature>
<protein>
    <recommendedName>
        <fullName evidence="1">Adenosine deaminase</fullName>
        <ecNumber evidence="1">3.5.4.4</ecNumber>
    </recommendedName>
    <alternativeName>
        <fullName evidence="1">Adenosine aminohydrolase</fullName>
    </alternativeName>
</protein>